<evidence type="ECO:0000255" key="1">
    <source>
        <dbReference type="HAMAP-Rule" id="MF_00367"/>
    </source>
</evidence>
<evidence type="ECO:0000255" key="2">
    <source>
        <dbReference type="PROSITE-ProRule" id="PRU01050"/>
    </source>
</evidence>
<keyword id="KW-0997">Cell inner membrane</keyword>
<keyword id="KW-1003">Cell membrane</keyword>
<keyword id="KW-0963">Cytoplasm</keyword>
<keyword id="KW-0342">GTP-binding</keyword>
<keyword id="KW-0472">Membrane</keyword>
<keyword id="KW-0547">Nucleotide-binding</keyword>
<keyword id="KW-1185">Reference proteome</keyword>
<keyword id="KW-0690">Ribosome biogenesis</keyword>
<keyword id="KW-0694">RNA-binding</keyword>
<keyword id="KW-0699">rRNA-binding</keyword>
<name>ERA_ACTP2</name>
<comment type="function">
    <text evidence="1">An essential GTPase that binds both GDP and GTP, with rapid nucleotide exchange. Plays a role in 16S rRNA processing and 30S ribosomal subunit biogenesis and possibly also in cell cycle regulation and energy metabolism.</text>
</comment>
<comment type="subunit">
    <text evidence="1">Monomer.</text>
</comment>
<comment type="subcellular location">
    <subcellularLocation>
        <location>Cytoplasm</location>
    </subcellularLocation>
    <subcellularLocation>
        <location evidence="1">Cell inner membrane</location>
        <topology evidence="1">Peripheral membrane protein</topology>
    </subcellularLocation>
</comment>
<comment type="similarity">
    <text evidence="1 2">Belongs to the TRAFAC class TrmE-Era-EngA-EngB-Septin-like GTPase superfamily. Era GTPase family.</text>
</comment>
<protein>
    <recommendedName>
        <fullName evidence="1">GTPase Era</fullName>
    </recommendedName>
</protein>
<organism>
    <name type="scientific">Actinobacillus pleuropneumoniae serotype 5b (strain L20)</name>
    <dbReference type="NCBI Taxonomy" id="416269"/>
    <lineage>
        <taxon>Bacteria</taxon>
        <taxon>Pseudomonadati</taxon>
        <taxon>Pseudomonadota</taxon>
        <taxon>Gammaproteobacteria</taxon>
        <taxon>Pasteurellales</taxon>
        <taxon>Pasteurellaceae</taxon>
        <taxon>Actinobacillus</taxon>
    </lineage>
</organism>
<reference key="1">
    <citation type="journal article" date="2008" name="J. Bacteriol.">
        <title>The complete genome sequence of Actinobacillus pleuropneumoniae L20 (serotype 5b).</title>
        <authorList>
            <person name="Foote S.J."/>
            <person name="Bosse J.T."/>
            <person name="Bouevitch A.B."/>
            <person name="Langford P.R."/>
            <person name="Young N.M."/>
            <person name="Nash J.H.E."/>
        </authorList>
    </citation>
    <scope>NUCLEOTIDE SEQUENCE [LARGE SCALE GENOMIC DNA]</scope>
    <source>
        <strain>L20</strain>
    </source>
</reference>
<gene>
    <name evidence="1" type="primary">era</name>
    <name type="ordered locus">APL_0544</name>
</gene>
<proteinExistence type="inferred from homology"/>
<feature type="chain" id="PRO_1000079654" description="GTPase Era">
    <location>
        <begin position="1"/>
        <end position="304"/>
    </location>
</feature>
<feature type="domain" description="Era-type G" evidence="2">
    <location>
        <begin position="11"/>
        <end position="179"/>
    </location>
</feature>
<feature type="domain" description="KH type-2" evidence="1">
    <location>
        <begin position="210"/>
        <end position="287"/>
    </location>
</feature>
<feature type="region of interest" description="G1" evidence="2">
    <location>
        <begin position="19"/>
        <end position="26"/>
    </location>
</feature>
<feature type="region of interest" description="G2" evidence="2">
    <location>
        <begin position="45"/>
        <end position="49"/>
    </location>
</feature>
<feature type="region of interest" description="G3" evidence="2">
    <location>
        <begin position="66"/>
        <end position="69"/>
    </location>
</feature>
<feature type="region of interest" description="G4" evidence="2">
    <location>
        <begin position="128"/>
        <end position="131"/>
    </location>
</feature>
<feature type="region of interest" description="G5" evidence="2">
    <location>
        <begin position="158"/>
        <end position="160"/>
    </location>
</feature>
<feature type="binding site" evidence="1">
    <location>
        <begin position="19"/>
        <end position="26"/>
    </location>
    <ligand>
        <name>GTP</name>
        <dbReference type="ChEBI" id="CHEBI:37565"/>
    </ligand>
</feature>
<feature type="binding site" evidence="1">
    <location>
        <begin position="66"/>
        <end position="70"/>
    </location>
    <ligand>
        <name>GTP</name>
        <dbReference type="ChEBI" id="CHEBI:37565"/>
    </ligand>
</feature>
<feature type="binding site" evidence="1">
    <location>
        <begin position="128"/>
        <end position="131"/>
    </location>
    <ligand>
        <name>GTP</name>
        <dbReference type="ChEBI" id="CHEBI:37565"/>
    </ligand>
</feature>
<accession>A3MZR0</accession>
<sequence>MTEQNQQPKTYCGFIAIVGRPNVGKSTLLNKILGQKISITSRKAQTTRHRIVGIHTEDQYQAIYVDTPGLHIEEKRAINRLMNRAASSAIGDVDLIIFVVEGTKWTDDDEMVLNKLRSAKAPVVLAINKVDNIKEKDELLPHITELSQKFDFAEILPISAQRGKNVHILQKIVRKSLREGVHHFPEEYVTDRSQRFMASEIIREKLMRFTGEELPYSVTVEIEQFKLNERGTYEINGLILVEREGQKKMVIGAKGQKIKTIGMEARADMERLFDNKVHLELWVKVKAGWADDERALRSLGYMDE</sequence>
<dbReference type="EMBL" id="CP000569">
    <property type="protein sequence ID" value="ABN73646.1"/>
    <property type="molecule type" value="Genomic_DNA"/>
</dbReference>
<dbReference type="RefSeq" id="WP_005611747.1">
    <property type="nucleotide sequence ID" value="NC_009053.1"/>
</dbReference>
<dbReference type="SMR" id="A3MZR0"/>
<dbReference type="STRING" id="416269.APL_0544"/>
<dbReference type="EnsemblBacteria" id="ABN73646">
    <property type="protein sequence ID" value="ABN73646"/>
    <property type="gene ID" value="APL_0544"/>
</dbReference>
<dbReference type="KEGG" id="apl:APL_0544"/>
<dbReference type="eggNOG" id="COG1159">
    <property type="taxonomic scope" value="Bacteria"/>
</dbReference>
<dbReference type="HOGENOM" id="CLU_038009_1_0_6"/>
<dbReference type="Proteomes" id="UP000001432">
    <property type="component" value="Chromosome"/>
</dbReference>
<dbReference type="GO" id="GO:0005829">
    <property type="term" value="C:cytosol"/>
    <property type="evidence" value="ECO:0007669"/>
    <property type="project" value="TreeGrafter"/>
</dbReference>
<dbReference type="GO" id="GO:0005886">
    <property type="term" value="C:plasma membrane"/>
    <property type="evidence" value="ECO:0007669"/>
    <property type="project" value="UniProtKB-SubCell"/>
</dbReference>
<dbReference type="GO" id="GO:0005525">
    <property type="term" value="F:GTP binding"/>
    <property type="evidence" value="ECO:0007669"/>
    <property type="project" value="UniProtKB-UniRule"/>
</dbReference>
<dbReference type="GO" id="GO:0003924">
    <property type="term" value="F:GTPase activity"/>
    <property type="evidence" value="ECO:0007669"/>
    <property type="project" value="UniProtKB-UniRule"/>
</dbReference>
<dbReference type="GO" id="GO:0043024">
    <property type="term" value="F:ribosomal small subunit binding"/>
    <property type="evidence" value="ECO:0007669"/>
    <property type="project" value="TreeGrafter"/>
</dbReference>
<dbReference type="GO" id="GO:0070181">
    <property type="term" value="F:small ribosomal subunit rRNA binding"/>
    <property type="evidence" value="ECO:0007669"/>
    <property type="project" value="UniProtKB-UniRule"/>
</dbReference>
<dbReference type="GO" id="GO:0000028">
    <property type="term" value="P:ribosomal small subunit assembly"/>
    <property type="evidence" value="ECO:0007669"/>
    <property type="project" value="TreeGrafter"/>
</dbReference>
<dbReference type="CDD" id="cd04163">
    <property type="entry name" value="Era"/>
    <property type="match status" value="1"/>
</dbReference>
<dbReference type="CDD" id="cd22534">
    <property type="entry name" value="KH-II_Era"/>
    <property type="match status" value="1"/>
</dbReference>
<dbReference type="FunFam" id="3.30.300.20:FF:000003">
    <property type="entry name" value="GTPase Era"/>
    <property type="match status" value="1"/>
</dbReference>
<dbReference type="FunFam" id="3.40.50.300:FF:000094">
    <property type="entry name" value="GTPase Era"/>
    <property type="match status" value="1"/>
</dbReference>
<dbReference type="Gene3D" id="3.30.300.20">
    <property type="match status" value="1"/>
</dbReference>
<dbReference type="Gene3D" id="3.40.50.300">
    <property type="entry name" value="P-loop containing nucleotide triphosphate hydrolases"/>
    <property type="match status" value="1"/>
</dbReference>
<dbReference type="HAMAP" id="MF_00367">
    <property type="entry name" value="GTPase_Era"/>
    <property type="match status" value="1"/>
</dbReference>
<dbReference type="InterPro" id="IPR030388">
    <property type="entry name" value="G_ERA_dom"/>
</dbReference>
<dbReference type="InterPro" id="IPR006073">
    <property type="entry name" value="GTP-bd"/>
</dbReference>
<dbReference type="InterPro" id="IPR005662">
    <property type="entry name" value="GTPase_Era-like"/>
</dbReference>
<dbReference type="InterPro" id="IPR015946">
    <property type="entry name" value="KH_dom-like_a/b"/>
</dbReference>
<dbReference type="InterPro" id="IPR004044">
    <property type="entry name" value="KH_dom_type_2"/>
</dbReference>
<dbReference type="InterPro" id="IPR009019">
    <property type="entry name" value="KH_sf_prok-type"/>
</dbReference>
<dbReference type="InterPro" id="IPR027417">
    <property type="entry name" value="P-loop_NTPase"/>
</dbReference>
<dbReference type="InterPro" id="IPR005225">
    <property type="entry name" value="Small_GTP-bd"/>
</dbReference>
<dbReference type="NCBIfam" id="TIGR00436">
    <property type="entry name" value="era"/>
    <property type="match status" value="1"/>
</dbReference>
<dbReference type="NCBIfam" id="NF000908">
    <property type="entry name" value="PRK00089.1"/>
    <property type="match status" value="1"/>
</dbReference>
<dbReference type="NCBIfam" id="TIGR00231">
    <property type="entry name" value="small_GTP"/>
    <property type="match status" value="1"/>
</dbReference>
<dbReference type="PANTHER" id="PTHR42698">
    <property type="entry name" value="GTPASE ERA"/>
    <property type="match status" value="1"/>
</dbReference>
<dbReference type="PANTHER" id="PTHR42698:SF1">
    <property type="entry name" value="GTPASE ERA, MITOCHONDRIAL"/>
    <property type="match status" value="1"/>
</dbReference>
<dbReference type="Pfam" id="PF07650">
    <property type="entry name" value="KH_2"/>
    <property type="match status" value="1"/>
</dbReference>
<dbReference type="Pfam" id="PF01926">
    <property type="entry name" value="MMR_HSR1"/>
    <property type="match status" value="1"/>
</dbReference>
<dbReference type="PRINTS" id="PR00326">
    <property type="entry name" value="GTP1OBG"/>
</dbReference>
<dbReference type="SUPFAM" id="SSF52540">
    <property type="entry name" value="P-loop containing nucleoside triphosphate hydrolases"/>
    <property type="match status" value="1"/>
</dbReference>
<dbReference type="SUPFAM" id="SSF54814">
    <property type="entry name" value="Prokaryotic type KH domain (KH-domain type II)"/>
    <property type="match status" value="1"/>
</dbReference>
<dbReference type="PROSITE" id="PS51713">
    <property type="entry name" value="G_ERA"/>
    <property type="match status" value="1"/>
</dbReference>
<dbReference type="PROSITE" id="PS50823">
    <property type="entry name" value="KH_TYPE_2"/>
    <property type="match status" value="1"/>
</dbReference>